<feature type="chain" id="PRO_1000057443" description="Adenylyl-sulfate kinase">
    <location>
        <begin position="1"/>
        <end position="201"/>
    </location>
</feature>
<feature type="active site" description="Phosphoserine intermediate" evidence="1">
    <location>
        <position position="109"/>
    </location>
</feature>
<feature type="binding site" evidence="1">
    <location>
        <begin position="35"/>
        <end position="42"/>
    </location>
    <ligand>
        <name>ATP</name>
        <dbReference type="ChEBI" id="CHEBI:30616"/>
    </ligand>
</feature>
<comment type="function">
    <text evidence="1">Catalyzes the synthesis of activated sulfate.</text>
</comment>
<comment type="catalytic activity">
    <reaction evidence="1">
        <text>adenosine 5'-phosphosulfate + ATP = 3'-phosphoadenylyl sulfate + ADP + H(+)</text>
        <dbReference type="Rhea" id="RHEA:24152"/>
        <dbReference type="ChEBI" id="CHEBI:15378"/>
        <dbReference type="ChEBI" id="CHEBI:30616"/>
        <dbReference type="ChEBI" id="CHEBI:58243"/>
        <dbReference type="ChEBI" id="CHEBI:58339"/>
        <dbReference type="ChEBI" id="CHEBI:456216"/>
        <dbReference type="EC" id="2.7.1.25"/>
    </reaction>
</comment>
<comment type="pathway">
    <text evidence="1">Sulfur metabolism; hydrogen sulfide biosynthesis; sulfite from sulfate: step 2/3.</text>
</comment>
<comment type="similarity">
    <text evidence="1">Belongs to the APS kinase family.</text>
</comment>
<evidence type="ECO:0000255" key="1">
    <source>
        <dbReference type="HAMAP-Rule" id="MF_00065"/>
    </source>
</evidence>
<reference key="1">
    <citation type="journal article" date="2008" name="J. Bacteriol.">
        <title>The pangenome structure of Escherichia coli: comparative genomic analysis of E. coli commensal and pathogenic isolates.</title>
        <authorList>
            <person name="Rasko D.A."/>
            <person name="Rosovitz M.J."/>
            <person name="Myers G.S.A."/>
            <person name="Mongodin E.F."/>
            <person name="Fricke W.F."/>
            <person name="Gajer P."/>
            <person name="Crabtree J."/>
            <person name="Sebaihia M."/>
            <person name="Thomson N.R."/>
            <person name="Chaudhuri R."/>
            <person name="Henderson I.R."/>
            <person name="Sperandio V."/>
            <person name="Ravel J."/>
        </authorList>
    </citation>
    <scope>NUCLEOTIDE SEQUENCE [LARGE SCALE GENOMIC DNA]</scope>
    <source>
        <strain>HS</strain>
    </source>
</reference>
<proteinExistence type="inferred from homology"/>
<name>CYSC_ECOHS</name>
<organism>
    <name type="scientific">Escherichia coli O9:H4 (strain HS)</name>
    <dbReference type="NCBI Taxonomy" id="331112"/>
    <lineage>
        <taxon>Bacteria</taxon>
        <taxon>Pseudomonadati</taxon>
        <taxon>Pseudomonadota</taxon>
        <taxon>Gammaproteobacteria</taxon>
        <taxon>Enterobacterales</taxon>
        <taxon>Enterobacteriaceae</taxon>
        <taxon>Escherichia</taxon>
    </lineage>
</organism>
<gene>
    <name evidence="1" type="primary">cysC</name>
    <name type="ordered locus">EcHS_A2888</name>
</gene>
<accession>A8A3M9</accession>
<sequence length="201" mass="22321">MALHDENVVWHSHPVTVQQRELHHGHRGVVLWFTGLSGSGKSTVAGALEEALHKLGVSTYLLDGDNVRHGLCSDLGFSDADRKENIRRVGEVANLMVEAGLVVLTAFISPHRAERQMVRERVGEGRFIEVFVDTPLAICEARDPKGLYKKARAGELRNFTGIDSVYEAPESAEIHLNGEQLVTNLVQQLLDLLRQNDIIRS</sequence>
<keyword id="KW-0067">ATP-binding</keyword>
<keyword id="KW-0418">Kinase</keyword>
<keyword id="KW-0547">Nucleotide-binding</keyword>
<keyword id="KW-0597">Phosphoprotein</keyword>
<keyword id="KW-0808">Transferase</keyword>
<protein>
    <recommendedName>
        <fullName evidence="1">Adenylyl-sulfate kinase</fullName>
        <ecNumber evidence="1">2.7.1.25</ecNumber>
    </recommendedName>
    <alternativeName>
        <fullName evidence="1">APS kinase</fullName>
    </alternativeName>
    <alternativeName>
        <fullName evidence="1">ATP adenosine-5'-phosphosulfate 3'-phosphotransferase</fullName>
    </alternativeName>
    <alternativeName>
        <fullName evidence="1">Adenosine-5'-phosphosulfate kinase</fullName>
    </alternativeName>
</protein>
<dbReference type="EC" id="2.7.1.25" evidence="1"/>
<dbReference type="EMBL" id="CP000802">
    <property type="protein sequence ID" value="ABV07133.1"/>
    <property type="molecule type" value="Genomic_DNA"/>
</dbReference>
<dbReference type="RefSeq" id="WP_001173673.1">
    <property type="nucleotide sequence ID" value="NC_009800.1"/>
</dbReference>
<dbReference type="SMR" id="A8A3M9"/>
<dbReference type="GeneID" id="93779256"/>
<dbReference type="KEGG" id="ecx:EcHS_A2888"/>
<dbReference type="HOGENOM" id="CLU_046932_1_0_6"/>
<dbReference type="UniPathway" id="UPA00140">
    <property type="reaction ID" value="UER00205"/>
</dbReference>
<dbReference type="GO" id="GO:0004020">
    <property type="term" value="F:adenylylsulfate kinase activity"/>
    <property type="evidence" value="ECO:0007669"/>
    <property type="project" value="UniProtKB-UniRule"/>
</dbReference>
<dbReference type="GO" id="GO:0005524">
    <property type="term" value="F:ATP binding"/>
    <property type="evidence" value="ECO:0007669"/>
    <property type="project" value="UniProtKB-UniRule"/>
</dbReference>
<dbReference type="GO" id="GO:0070814">
    <property type="term" value="P:hydrogen sulfide biosynthetic process"/>
    <property type="evidence" value="ECO:0007669"/>
    <property type="project" value="UniProtKB-UniRule"/>
</dbReference>
<dbReference type="GO" id="GO:0000103">
    <property type="term" value="P:sulfate assimilation"/>
    <property type="evidence" value="ECO:0007669"/>
    <property type="project" value="UniProtKB-UniRule"/>
</dbReference>
<dbReference type="CDD" id="cd02027">
    <property type="entry name" value="APSK"/>
    <property type="match status" value="1"/>
</dbReference>
<dbReference type="FunFam" id="3.40.50.300:FF:000212">
    <property type="entry name" value="Adenylyl-sulfate kinase"/>
    <property type="match status" value="1"/>
</dbReference>
<dbReference type="Gene3D" id="3.40.50.300">
    <property type="entry name" value="P-loop containing nucleotide triphosphate hydrolases"/>
    <property type="match status" value="1"/>
</dbReference>
<dbReference type="HAMAP" id="MF_00065">
    <property type="entry name" value="Adenylyl_sulf_kinase"/>
    <property type="match status" value="1"/>
</dbReference>
<dbReference type="InterPro" id="IPR002891">
    <property type="entry name" value="APS_kinase"/>
</dbReference>
<dbReference type="InterPro" id="IPR027417">
    <property type="entry name" value="P-loop_NTPase"/>
</dbReference>
<dbReference type="NCBIfam" id="TIGR00455">
    <property type="entry name" value="apsK"/>
    <property type="match status" value="1"/>
</dbReference>
<dbReference type="NCBIfam" id="NF003013">
    <property type="entry name" value="PRK03846.1"/>
    <property type="match status" value="1"/>
</dbReference>
<dbReference type="PANTHER" id="PTHR11055:SF63">
    <property type="entry name" value="ADENYLYL-SULFATE KINASE 1, CHLOROPLASTIC"/>
    <property type="match status" value="1"/>
</dbReference>
<dbReference type="PANTHER" id="PTHR11055">
    <property type="entry name" value="BIFUNCTIONAL 3'-PHOSPHOADENOSINE 5'-PHOSPHOSULFATE SYNTHASE"/>
    <property type="match status" value="1"/>
</dbReference>
<dbReference type="Pfam" id="PF01583">
    <property type="entry name" value="APS_kinase"/>
    <property type="match status" value="1"/>
</dbReference>
<dbReference type="SUPFAM" id="SSF52540">
    <property type="entry name" value="P-loop containing nucleoside triphosphate hydrolases"/>
    <property type="match status" value="1"/>
</dbReference>